<keyword id="KW-0007">Acetylation</keyword>
<keyword id="KW-0903">Direct protein sequencing</keyword>
<keyword id="KW-1185">Reference proteome</keyword>
<keyword id="KW-0687">Ribonucleoprotein</keyword>
<keyword id="KW-0689">Ribosomal protein</keyword>
<keyword id="KW-0694">RNA-binding</keyword>
<proteinExistence type="evidence at protein level"/>
<feature type="chain" id="PRO_0000363832" description="Small ribosomal subunit protein uS3">
    <location>
        <begin position="1"/>
        <end position="218"/>
    </location>
</feature>
<feature type="domain" description="KH type-2">
    <location>
        <begin position="23"/>
        <end position="95"/>
    </location>
</feature>
<feature type="modified residue" description="N-acetylmethionine" evidence="1">
    <location>
        <position position="1"/>
    </location>
</feature>
<organism>
    <name type="scientific">Dictyostelium discoideum</name>
    <name type="common">Social amoeba</name>
    <dbReference type="NCBI Taxonomy" id="44689"/>
    <lineage>
        <taxon>Eukaryota</taxon>
        <taxon>Amoebozoa</taxon>
        <taxon>Evosea</taxon>
        <taxon>Eumycetozoa</taxon>
        <taxon>Dictyostelia</taxon>
        <taxon>Dictyosteliales</taxon>
        <taxon>Dictyosteliaceae</taxon>
        <taxon>Dictyostelium</taxon>
    </lineage>
</organism>
<accession>P90526</accession>
<accession>Q54C72</accession>
<sequence length="218" mass="24219">MNSSLQISKKRKFVADGVFHAELNELFTREFNKDEGYSGVELKTSPGLTEIIIRASKTQAVVGPNARRIQELCSLVQKRFNFKEGTVVLFAEKILNRGLCAVAQAESLKLKLLAGLPVRKACYAIVHQIMTRGAKGCEVIVSGKLRAQRAKSMKFRDGYMIKSGQPSKDFIDFACRHVLLRQGTLGVKVAIMLPYDETRKIHGACNIPQPDVVVIRDA</sequence>
<reference key="1">
    <citation type="submission" date="1996-11" db="EMBL/GenBank/DDBJ databases">
        <authorList>
            <person name="Loomis W.F."/>
            <person name="Iranfar N."/>
        </authorList>
    </citation>
    <scope>NUCLEOTIDE SEQUENCE [MRNA]</scope>
    <source>
        <strain>AX4</strain>
    </source>
</reference>
<reference key="2">
    <citation type="journal article" date="2005" name="Nature">
        <title>The genome of the social amoeba Dictyostelium discoideum.</title>
        <authorList>
            <person name="Eichinger L."/>
            <person name="Pachebat J.A."/>
            <person name="Gloeckner G."/>
            <person name="Rajandream M.A."/>
            <person name="Sucgang R."/>
            <person name="Berriman M."/>
            <person name="Song J."/>
            <person name="Olsen R."/>
            <person name="Szafranski K."/>
            <person name="Xu Q."/>
            <person name="Tunggal B."/>
            <person name="Kummerfeld S."/>
            <person name="Madera M."/>
            <person name="Konfortov B.A."/>
            <person name="Rivero F."/>
            <person name="Bankier A.T."/>
            <person name="Lehmann R."/>
            <person name="Hamlin N."/>
            <person name="Davies R."/>
            <person name="Gaudet P."/>
            <person name="Fey P."/>
            <person name="Pilcher K."/>
            <person name="Chen G."/>
            <person name="Saunders D."/>
            <person name="Sodergren E.J."/>
            <person name="Davis P."/>
            <person name="Kerhornou A."/>
            <person name="Nie X."/>
            <person name="Hall N."/>
            <person name="Anjard C."/>
            <person name="Hemphill L."/>
            <person name="Bason N."/>
            <person name="Farbrother P."/>
            <person name="Desany B."/>
            <person name="Just E."/>
            <person name="Morio T."/>
            <person name="Rost R."/>
            <person name="Churcher C.M."/>
            <person name="Cooper J."/>
            <person name="Haydock S."/>
            <person name="van Driessche N."/>
            <person name="Cronin A."/>
            <person name="Goodhead I."/>
            <person name="Muzny D.M."/>
            <person name="Mourier T."/>
            <person name="Pain A."/>
            <person name="Lu M."/>
            <person name="Harper D."/>
            <person name="Lindsay R."/>
            <person name="Hauser H."/>
            <person name="James K.D."/>
            <person name="Quiles M."/>
            <person name="Madan Babu M."/>
            <person name="Saito T."/>
            <person name="Buchrieser C."/>
            <person name="Wardroper A."/>
            <person name="Felder M."/>
            <person name="Thangavelu M."/>
            <person name="Johnson D."/>
            <person name="Knights A."/>
            <person name="Loulseged H."/>
            <person name="Mungall K.L."/>
            <person name="Oliver K."/>
            <person name="Price C."/>
            <person name="Quail M.A."/>
            <person name="Urushihara H."/>
            <person name="Hernandez J."/>
            <person name="Rabbinowitsch E."/>
            <person name="Steffen D."/>
            <person name="Sanders M."/>
            <person name="Ma J."/>
            <person name="Kohara Y."/>
            <person name="Sharp S."/>
            <person name="Simmonds M.N."/>
            <person name="Spiegler S."/>
            <person name="Tivey A."/>
            <person name="Sugano S."/>
            <person name="White B."/>
            <person name="Walker D."/>
            <person name="Woodward J.R."/>
            <person name="Winckler T."/>
            <person name="Tanaka Y."/>
            <person name="Shaulsky G."/>
            <person name="Schleicher M."/>
            <person name="Weinstock G.M."/>
            <person name="Rosenthal A."/>
            <person name="Cox E.C."/>
            <person name="Chisholm R.L."/>
            <person name="Gibbs R.A."/>
            <person name="Loomis W.F."/>
            <person name="Platzer M."/>
            <person name="Kay R.R."/>
            <person name="Williams J.G."/>
            <person name="Dear P.H."/>
            <person name="Noegel A.A."/>
            <person name="Barrell B.G."/>
            <person name="Kuspa A."/>
        </authorList>
    </citation>
    <scope>NUCLEOTIDE SEQUENCE [LARGE SCALE GENOMIC DNA]</scope>
    <source>
        <strain>AX4</strain>
    </source>
</reference>
<reference key="3">
    <citation type="submission" date="2010-01" db="UniProtKB">
        <authorList>
            <person name="Bienvenut W.V."/>
            <person name="Veltman D.M."/>
            <person name="Insall R.H."/>
        </authorList>
    </citation>
    <scope>PROTEIN SEQUENCE OF 1-9; 30-54; 58-67; 112-119 AND 189-200</scope>
    <scope>ACETYLATION AT MET-1</scope>
    <scope>IDENTIFICATION BY MASS SPECTROMETRY</scope>
</reference>
<protein>
    <recommendedName>
        <fullName evidence="2">Small ribosomal subunit protein uS3</fullName>
    </recommendedName>
    <alternativeName>
        <fullName>40S ribosomal protein S3</fullName>
    </alternativeName>
</protein>
<name>RS3_DICDI</name>
<gene>
    <name type="primary">rps3</name>
    <name type="synonym">rpgG</name>
    <name type="ORF">DDB_G0293000</name>
</gene>
<comment type="similarity">
    <text evidence="2">Belongs to the universal ribosomal protein uS3 family.</text>
</comment>
<dbReference type="EMBL" id="U78756">
    <property type="protein sequence ID" value="AAB36959.1"/>
    <property type="molecule type" value="mRNA"/>
</dbReference>
<dbReference type="EMBL" id="AAFI02000199">
    <property type="protein sequence ID" value="EAL60852.1"/>
    <property type="molecule type" value="Genomic_DNA"/>
</dbReference>
<dbReference type="RefSeq" id="XP_629347.1">
    <property type="nucleotide sequence ID" value="XM_629345.1"/>
</dbReference>
<dbReference type="SMR" id="P90526"/>
<dbReference type="FunCoup" id="P90526">
    <property type="interactions" value="721"/>
</dbReference>
<dbReference type="STRING" id="44689.P90526"/>
<dbReference type="PaxDb" id="44689-DDB0201667"/>
<dbReference type="EnsemblProtists" id="EAL60852">
    <property type="protein sequence ID" value="EAL60852"/>
    <property type="gene ID" value="DDB_G0293000"/>
</dbReference>
<dbReference type="GeneID" id="8629071"/>
<dbReference type="KEGG" id="ddi:DDB_G0293000"/>
<dbReference type="dictyBase" id="DDB_G0293000">
    <property type="gene designation" value="rps3"/>
</dbReference>
<dbReference type="VEuPathDB" id="AmoebaDB:DDB_G0293000"/>
<dbReference type="eggNOG" id="KOG3181">
    <property type="taxonomic scope" value="Eukaryota"/>
</dbReference>
<dbReference type="HOGENOM" id="CLU_058591_2_1_1"/>
<dbReference type="InParanoid" id="P90526"/>
<dbReference type="OMA" id="NKKKWMI"/>
<dbReference type="PhylomeDB" id="P90526"/>
<dbReference type="Reactome" id="R-DDI-156827">
    <property type="pathway name" value="L13a-mediated translational silencing of Ceruloplasmin expression"/>
</dbReference>
<dbReference type="Reactome" id="R-DDI-1799339">
    <property type="pathway name" value="SRP-dependent cotranslational protein targeting to membrane"/>
</dbReference>
<dbReference type="Reactome" id="R-DDI-72689">
    <property type="pathway name" value="Formation of a pool of free 40S subunits"/>
</dbReference>
<dbReference type="Reactome" id="R-DDI-72695">
    <property type="pathway name" value="Formation of the ternary complex, and subsequently, the 43S complex"/>
</dbReference>
<dbReference type="Reactome" id="R-DDI-72702">
    <property type="pathway name" value="Ribosomal scanning and start codon recognition"/>
</dbReference>
<dbReference type="Reactome" id="R-DDI-72706">
    <property type="pathway name" value="GTP hydrolysis and joining of the 60S ribosomal subunit"/>
</dbReference>
<dbReference type="Reactome" id="R-DDI-975956">
    <property type="pathway name" value="Nonsense Mediated Decay (NMD) independent of the Exon Junction Complex (EJC)"/>
</dbReference>
<dbReference type="Reactome" id="R-DDI-975957">
    <property type="pathway name" value="Nonsense Mediated Decay (NMD) enhanced by the Exon Junction Complex (EJC)"/>
</dbReference>
<dbReference type="PRO" id="PR:P90526"/>
<dbReference type="Proteomes" id="UP000002195">
    <property type="component" value="Chromosome 6"/>
</dbReference>
<dbReference type="GO" id="GO:0022627">
    <property type="term" value="C:cytosolic small ribosomal subunit"/>
    <property type="evidence" value="ECO:0000318"/>
    <property type="project" value="GO_Central"/>
</dbReference>
<dbReference type="GO" id="GO:0031012">
    <property type="term" value="C:extracellular matrix"/>
    <property type="evidence" value="ECO:0007005"/>
    <property type="project" value="dictyBase"/>
</dbReference>
<dbReference type="GO" id="GO:0005634">
    <property type="term" value="C:nucleus"/>
    <property type="evidence" value="ECO:0000318"/>
    <property type="project" value="GO_Central"/>
</dbReference>
<dbReference type="GO" id="GO:0045335">
    <property type="term" value="C:phagocytic vesicle"/>
    <property type="evidence" value="ECO:0007005"/>
    <property type="project" value="dictyBase"/>
</dbReference>
<dbReference type="GO" id="GO:0003723">
    <property type="term" value="F:RNA binding"/>
    <property type="evidence" value="ECO:0007669"/>
    <property type="project" value="UniProtKB-KW"/>
</dbReference>
<dbReference type="GO" id="GO:0003735">
    <property type="term" value="F:structural constituent of ribosome"/>
    <property type="evidence" value="ECO:0000250"/>
    <property type="project" value="dictyBase"/>
</dbReference>
<dbReference type="GO" id="GO:0006412">
    <property type="term" value="P:translation"/>
    <property type="evidence" value="ECO:0007669"/>
    <property type="project" value="InterPro"/>
</dbReference>
<dbReference type="CDD" id="cd02413">
    <property type="entry name" value="KH-II_40S_S3"/>
    <property type="match status" value="1"/>
</dbReference>
<dbReference type="FunFam" id="3.30.1140.32:FF:000013">
    <property type="entry name" value="40S ribosomal protein S3"/>
    <property type="match status" value="1"/>
</dbReference>
<dbReference type="FunFam" id="3.30.300.20:FF:000006">
    <property type="entry name" value="40S ribosomal protein S3"/>
    <property type="match status" value="1"/>
</dbReference>
<dbReference type="Gene3D" id="3.30.300.20">
    <property type="match status" value="1"/>
</dbReference>
<dbReference type="Gene3D" id="3.30.1140.32">
    <property type="entry name" value="Ribosomal protein S3, C-terminal domain"/>
    <property type="match status" value="1"/>
</dbReference>
<dbReference type="InterPro" id="IPR015946">
    <property type="entry name" value="KH_dom-like_a/b"/>
</dbReference>
<dbReference type="InterPro" id="IPR004044">
    <property type="entry name" value="KH_dom_type_2"/>
</dbReference>
<dbReference type="InterPro" id="IPR009019">
    <property type="entry name" value="KH_sf_prok-type"/>
</dbReference>
<dbReference type="InterPro" id="IPR036419">
    <property type="entry name" value="Ribosomal_S3_C_sf"/>
</dbReference>
<dbReference type="InterPro" id="IPR001351">
    <property type="entry name" value="Ribosomal_uS3_C"/>
</dbReference>
<dbReference type="InterPro" id="IPR005703">
    <property type="entry name" value="Ribosomal_uS3_euk/arc"/>
</dbReference>
<dbReference type="NCBIfam" id="TIGR01008">
    <property type="entry name" value="uS3_euk_arch"/>
    <property type="match status" value="1"/>
</dbReference>
<dbReference type="PANTHER" id="PTHR11760">
    <property type="entry name" value="30S/40S RIBOSOMAL PROTEIN S3"/>
    <property type="match status" value="1"/>
</dbReference>
<dbReference type="PANTHER" id="PTHR11760:SF32">
    <property type="entry name" value="SMALL RIBOSOMAL SUBUNIT PROTEIN US3"/>
    <property type="match status" value="1"/>
</dbReference>
<dbReference type="Pfam" id="PF07650">
    <property type="entry name" value="KH_2"/>
    <property type="match status" value="1"/>
</dbReference>
<dbReference type="Pfam" id="PF00189">
    <property type="entry name" value="Ribosomal_S3_C"/>
    <property type="match status" value="1"/>
</dbReference>
<dbReference type="SUPFAM" id="SSF54814">
    <property type="entry name" value="Prokaryotic type KH domain (KH-domain type II)"/>
    <property type="match status" value="1"/>
</dbReference>
<dbReference type="SUPFAM" id="SSF54821">
    <property type="entry name" value="Ribosomal protein S3 C-terminal domain"/>
    <property type="match status" value="1"/>
</dbReference>
<evidence type="ECO:0000269" key="1">
    <source ref="3"/>
</evidence>
<evidence type="ECO:0000305" key="2"/>